<accession>P18349</accession>
<protein>
    <recommendedName>
        <fullName>Virion protein US10 homolog</fullName>
    </recommendedName>
    <alternativeName>
        <fullName>ORF3</fullName>
    </alternativeName>
</protein>
<organism>
    <name type="scientific">Equine herpesvirus 4 (strain 1942)</name>
    <name type="common">EHV-4</name>
    <name type="synonym">Equine rhinopneumonitis virus</name>
    <dbReference type="NCBI Taxonomy" id="10333"/>
    <lineage>
        <taxon>Viruses</taxon>
        <taxon>Duplodnaviria</taxon>
        <taxon>Heunggongvirae</taxon>
        <taxon>Peploviricota</taxon>
        <taxon>Herviviricetes</taxon>
        <taxon>Herpesvirales</taxon>
        <taxon>Orthoherpesviridae</taxon>
        <taxon>Alphaherpesvirinae</taxon>
        <taxon>Varicellovirus</taxon>
        <taxon>Varicellovirus equidalpha4</taxon>
        <taxon>Equid alphaherpesvirus 4</taxon>
    </lineage>
</organism>
<reference key="1">
    <citation type="journal article" date="1988" name="J. Gen. Virol.">
        <title>Characterization of the genome of equine herpesvirus 1 subtype 2.</title>
        <authorList>
            <person name="Cullinane A.A."/>
            <person name="Rixon F.J."/>
            <person name="Davison A.J."/>
        </authorList>
    </citation>
    <scope>NUCLEOTIDE SEQUENCE [GENOMIC DNA]</scope>
</reference>
<evidence type="ECO:0000250" key="1"/>
<evidence type="ECO:0000255" key="2"/>
<evidence type="ECO:0000305" key="3"/>
<proteinExistence type="evidence at transcript level"/>
<feature type="chain" id="PRO_0000116147" description="Virion protein US10 homolog">
    <location>
        <begin position="1"/>
        <end position="259"/>
    </location>
</feature>
<feature type="zinc finger region" evidence="2">
    <location>
        <begin position="162"/>
        <end position="174"/>
    </location>
</feature>
<comment type="subcellular location">
    <subcellularLocation>
        <location evidence="1">Virion tegument</location>
    </subcellularLocation>
    <subcellularLocation>
        <location evidence="1">Host nucleus matrix</location>
    </subcellularLocation>
</comment>
<comment type="induction">
    <text>Expressed late in the infection cycle.</text>
</comment>
<comment type="PTM">
    <text evidence="1">Phosphorylated.</text>
</comment>
<comment type="similarity">
    <text evidence="3">Belongs to the herpesviridae US10 family.</text>
</comment>
<keyword id="KW-1048">Host nucleus</keyword>
<keyword id="KW-0426">Late protein</keyword>
<keyword id="KW-0479">Metal-binding</keyword>
<keyword id="KW-0946">Virion</keyword>
<keyword id="KW-0920">Virion tegument</keyword>
<keyword id="KW-0862">Zinc</keyword>
<keyword id="KW-0863">Zinc-finger</keyword>
<sequence>MAHAIPRPAEEIPLVPGRARSVRLGSTLPRVMDCAYGSPMAVDGDVRTGGDCGGGEGLYPTSTDTAAHAVSLPRSVGEFASAVRAMSADAADALRRGAGPPPEIWPRAYRMFCELFGRYAVSPMPVFHSADPLRRAVGRYLVDLGAAPVETHAELSTRLLFCAHWCCLGHAFGCSRQAMYERECARFFEARLGIGETPPADSERYWVALLDMAGADPELFPRHAAAAAYLRTRGRKLPLPLPPQAGSATVSVASQSINF</sequence>
<name>US10_EHV4</name>
<dbReference type="EMBL" id="D00318">
    <property type="protein sequence ID" value="BAA00220.1"/>
    <property type="molecule type" value="Genomic_DNA"/>
</dbReference>
<dbReference type="GO" id="GO:0044204">
    <property type="term" value="C:host cell nuclear matrix"/>
    <property type="evidence" value="ECO:0007669"/>
    <property type="project" value="UniProtKB-SubCell"/>
</dbReference>
<dbReference type="GO" id="GO:0019033">
    <property type="term" value="C:viral tegument"/>
    <property type="evidence" value="ECO:0007669"/>
    <property type="project" value="UniProtKB-SubCell"/>
</dbReference>
<dbReference type="GO" id="GO:0008270">
    <property type="term" value="F:zinc ion binding"/>
    <property type="evidence" value="ECO:0007669"/>
    <property type="project" value="UniProtKB-KW"/>
</dbReference>
<dbReference type="InterPro" id="IPR000714">
    <property type="entry name" value="EHV_Unk"/>
</dbReference>
<dbReference type="Pfam" id="PF02053">
    <property type="entry name" value="Gene66"/>
    <property type="match status" value="1"/>
</dbReference>
<dbReference type="PRINTS" id="PR00957">
    <property type="entry name" value="GENE66"/>
</dbReference>
<organismHost>
    <name type="scientific">Equus caballus</name>
    <name type="common">Horse</name>
    <dbReference type="NCBI Taxonomy" id="9796"/>
</organismHost>